<evidence type="ECO:0000255" key="1">
    <source>
        <dbReference type="HAMAP-Rule" id="MF_00183"/>
    </source>
</evidence>
<feature type="chain" id="PRO_0000163653" description="1-deoxy-D-xylulose 5-phosphate reductoisomerase">
    <location>
        <begin position="1"/>
        <end position="385"/>
    </location>
</feature>
<feature type="binding site" evidence="1">
    <location>
        <position position="13"/>
    </location>
    <ligand>
        <name>NADPH</name>
        <dbReference type="ChEBI" id="CHEBI:57783"/>
    </ligand>
</feature>
<feature type="binding site" evidence="1">
    <location>
        <position position="14"/>
    </location>
    <ligand>
        <name>NADPH</name>
        <dbReference type="ChEBI" id="CHEBI:57783"/>
    </ligand>
</feature>
<feature type="binding site" evidence="1">
    <location>
        <position position="15"/>
    </location>
    <ligand>
        <name>NADPH</name>
        <dbReference type="ChEBI" id="CHEBI:57783"/>
    </ligand>
</feature>
<feature type="binding site" evidence="1">
    <location>
        <position position="16"/>
    </location>
    <ligand>
        <name>NADPH</name>
        <dbReference type="ChEBI" id="CHEBI:57783"/>
    </ligand>
</feature>
<feature type="binding site" evidence="1">
    <location>
        <position position="40"/>
    </location>
    <ligand>
        <name>NADPH</name>
        <dbReference type="ChEBI" id="CHEBI:57783"/>
    </ligand>
</feature>
<feature type="binding site" evidence="1">
    <location>
        <position position="122"/>
    </location>
    <ligand>
        <name>NADPH</name>
        <dbReference type="ChEBI" id="CHEBI:57783"/>
    </ligand>
</feature>
<feature type="binding site" evidence="1">
    <location>
        <position position="123"/>
    </location>
    <ligand>
        <name>1-deoxy-D-xylulose 5-phosphate</name>
        <dbReference type="ChEBI" id="CHEBI:57792"/>
    </ligand>
</feature>
<feature type="binding site" evidence="1">
    <location>
        <position position="124"/>
    </location>
    <ligand>
        <name>NADPH</name>
        <dbReference type="ChEBI" id="CHEBI:57783"/>
    </ligand>
</feature>
<feature type="binding site" evidence="1">
    <location>
        <position position="148"/>
    </location>
    <ligand>
        <name>Mn(2+)</name>
        <dbReference type="ChEBI" id="CHEBI:29035"/>
    </ligand>
</feature>
<feature type="binding site" evidence="1">
    <location>
        <position position="149"/>
    </location>
    <ligand>
        <name>1-deoxy-D-xylulose 5-phosphate</name>
        <dbReference type="ChEBI" id="CHEBI:57792"/>
    </ligand>
</feature>
<feature type="binding site" evidence="1">
    <location>
        <position position="150"/>
    </location>
    <ligand>
        <name>1-deoxy-D-xylulose 5-phosphate</name>
        <dbReference type="ChEBI" id="CHEBI:57792"/>
    </ligand>
</feature>
<feature type="binding site" evidence="1">
    <location>
        <position position="150"/>
    </location>
    <ligand>
        <name>Mn(2+)</name>
        <dbReference type="ChEBI" id="CHEBI:29035"/>
    </ligand>
</feature>
<feature type="binding site" evidence="1">
    <location>
        <position position="177"/>
    </location>
    <ligand>
        <name>1-deoxy-D-xylulose 5-phosphate</name>
        <dbReference type="ChEBI" id="CHEBI:57792"/>
    </ligand>
</feature>
<feature type="binding site" evidence="1">
    <location>
        <position position="200"/>
    </location>
    <ligand>
        <name>1-deoxy-D-xylulose 5-phosphate</name>
        <dbReference type="ChEBI" id="CHEBI:57792"/>
    </ligand>
</feature>
<feature type="binding site" evidence="1">
    <location>
        <position position="206"/>
    </location>
    <ligand>
        <name>NADPH</name>
        <dbReference type="ChEBI" id="CHEBI:57783"/>
    </ligand>
</feature>
<feature type="binding site" evidence="1">
    <location>
        <position position="213"/>
    </location>
    <ligand>
        <name>1-deoxy-D-xylulose 5-phosphate</name>
        <dbReference type="ChEBI" id="CHEBI:57792"/>
    </ligand>
</feature>
<feature type="binding site" evidence="1">
    <location>
        <position position="218"/>
    </location>
    <ligand>
        <name>1-deoxy-D-xylulose 5-phosphate</name>
        <dbReference type="ChEBI" id="CHEBI:57792"/>
    </ligand>
</feature>
<feature type="binding site" evidence="1">
    <location>
        <position position="219"/>
    </location>
    <ligand>
        <name>1-deoxy-D-xylulose 5-phosphate</name>
        <dbReference type="ChEBI" id="CHEBI:57792"/>
    </ligand>
</feature>
<feature type="binding site" evidence="1">
    <location>
        <position position="222"/>
    </location>
    <ligand>
        <name>1-deoxy-D-xylulose 5-phosphate</name>
        <dbReference type="ChEBI" id="CHEBI:57792"/>
    </ligand>
</feature>
<feature type="binding site" evidence="1">
    <location>
        <position position="222"/>
    </location>
    <ligand>
        <name>Mn(2+)</name>
        <dbReference type="ChEBI" id="CHEBI:29035"/>
    </ligand>
</feature>
<name>DXR_FRATT</name>
<organism>
    <name type="scientific">Francisella tularensis subsp. tularensis (strain SCHU S4 / Schu 4)</name>
    <dbReference type="NCBI Taxonomy" id="177416"/>
    <lineage>
        <taxon>Bacteria</taxon>
        <taxon>Pseudomonadati</taxon>
        <taxon>Pseudomonadota</taxon>
        <taxon>Gammaproteobacteria</taxon>
        <taxon>Thiotrichales</taxon>
        <taxon>Francisellaceae</taxon>
        <taxon>Francisella</taxon>
    </lineage>
</organism>
<gene>
    <name evidence="1" type="primary">dxr</name>
    <name type="ordered locus">FTT_1574c</name>
</gene>
<dbReference type="EC" id="1.1.1.267" evidence="1"/>
<dbReference type="EMBL" id="AJ749949">
    <property type="protein sequence ID" value="CAG46207.1"/>
    <property type="molecule type" value="Genomic_DNA"/>
</dbReference>
<dbReference type="RefSeq" id="WP_003018074.1">
    <property type="nucleotide sequence ID" value="NZ_CP010290.1"/>
</dbReference>
<dbReference type="RefSeq" id="YP_170496.1">
    <property type="nucleotide sequence ID" value="NC_006570.2"/>
</dbReference>
<dbReference type="SMR" id="Q5NEP6"/>
<dbReference type="STRING" id="177416.FTT_1574c"/>
<dbReference type="DNASU" id="3191554"/>
<dbReference type="EnsemblBacteria" id="CAG46207">
    <property type="protein sequence ID" value="CAG46207"/>
    <property type="gene ID" value="FTT_1574c"/>
</dbReference>
<dbReference type="KEGG" id="ftu:FTT_1574c"/>
<dbReference type="eggNOG" id="COG0743">
    <property type="taxonomic scope" value="Bacteria"/>
</dbReference>
<dbReference type="OrthoDB" id="9806546at2"/>
<dbReference type="UniPathway" id="UPA00056">
    <property type="reaction ID" value="UER00092"/>
</dbReference>
<dbReference type="Proteomes" id="UP000001174">
    <property type="component" value="Chromosome"/>
</dbReference>
<dbReference type="GO" id="GO:0030604">
    <property type="term" value="F:1-deoxy-D-xylulose-5-phosphate reductoisomerase activity"/>
    <property type="evidence" value="ECO:0007669"/>
    <property type="project" value="UniProtKB-UniRule"/>
</dbReference>
<dbReference type="GO" id="GO:0030145">
    <property type="term" value="F:manganese ion binding"/>
    <property type="evidence" value="ECO:0007669"/>
    <property type="project" value="TreeGrafter"/>
</dbReference>
<dbReference type="GO" id="GO:0070402">
    <property type="term" value="F:NADPH binding"/>
    <property type="evidence" value="ECO:0007669"/>
    <property type="project" value="InterPro"/>
</dbReference>
<dbReference type="GO" id="GO:0051484">
    <property type="term" value="P:isopentenyl diphosphate biosynthetic process, methylerythritol 4-phosphate pathway involved in terpenoid biosynthetic process"/>
    <property type="evidence" value="ECO:0007669"/>
    <property type="project" value="TreeGrafter"/>
</dbReference>
<dbReference type="FunFam" id="3.40.50.720:FF:000045">
    <property type="entry name" value="1-deoxy-D-xylulose 5-phosphate reductoisomerase"/>
    <property type="match status" value="1"/>
</dbReference>
<dbReference type="Gene3D" id="1.10.1740.10">
    <property type="match status" value="1"/>
</dbReference>
<dbReference type="Gene3D" id="3.40.50.720">
    <property type="entry name" value="NAD(P)-binding Rossmann-like Domain"/>
    <property type="match status" value="1"/>
</dbReference>
<dbReference type="HAMAP" id="MF_00183">
    <property type="entry name" value="DXP_reductoisom"/>
    <property type="match status" value="1"/>
</dbReference>
<dbReference type="InterPro" id="IPR003821">
    <property type="entry name" value="DXP_reductoisomerase"/>
</dbReference>
<dbReference type="InterPro" id="IPR013644">
    <property type="entry name" value="DXP_reductoisomerase_C"/>
</dbReference>
<dbReference type="InterPro" id="IPR013512">
    <property type="entry name" value="DXP_reductoisomerase_N"/>
</dbReference>
<dbReference type="InterPro" id="IPR026877">
    <property type="entry name" value="DXPR_C"/>
</dbReference>
<dbReference type="InterPro" id="IPR036169">
    <property type="entry name" value="DXPR_C_sf"/>
</dbReference>
<dbReference type="InterPro" id="IPR036291">
    <property type="entry name" value="NAD(P)-bd_dom_sf"/>
</dbReference>
<dbReference type="NCBIfam" id="TIGR00243">
    <property type="entry name" value="Dxr"/>
    <property type="match status" value="1"/>
</dbReference>
<dbReference type="PANTHER" id="PTHR30525">
    <property type="entry name" value="1-DEOXY-D-XYLULOSE 5-PHOSPHATE REDUCTOISOMERASE"/>
    <property type="match status" value="1"/>
</dbReference>
<dbReference type="PANTHER" id="PTHR30525:SF0">
    <property type="entry name" value="1-DEOXY-D-XYLULOSE 5-PHOSPHATE REDUCTOISOMERASE, CHLOROPLASTIC"/>
    <property type="match status" value="1"/>
</dbReference>
<dbReference type="Pfam" id="PF08436">
    <property type="entry name" value="DXP_redisom_C"/>
    <property type="match status" value="1"/>
</dbReference>
<dbReference type="Pfam" id="PF02670">
    <property type="entry name" value="DXP_reductoisom"/>
    <property type="match status" value="1"/>
</dbReference>
<dbReference type="Pfam" id="PF13288">
    <property type="entry name" value="DXPR_C"/>
    <property type="match status" value="1"/>
</dbReference>
<dbReference type="PIRSF" id="PIRSF006205">
    <property type="entry name" value="Dxp_reductismrs"/>
    <property type="match status" value="1"/>
</dbReference>
<dbReference type="SUPFAM" id="SSF69055">
    <property type="entry name" value="1-deoxy-D-xylulose-5-phosphate reductoisomerase, C-terminal domain"/>
    <property type="match status" value="1"/>
</dbReference>
<dbReference type="SUPFAM" id="SSF55347">
    <property type="entry name" value="Glyceraldehyde-3-phosphate dehydrogenase-like, C-terminal domain"/>
    <property type="match status" value="1"/>
</dbReference>
<dbReference type="SUPFAM" id="SSF51735">
    <property type="entry name" value="NAD(P)-binding Rossmann-fold domains"/>
    <property type="match status" value="1"/>
</dbReference>
<proteinExistence type="inferred from homology"/>
<protein>
    <recommendedName>
        <fullName evidence="1">1-deoxy-D-xylulose 5-phosphate reductoisomerase</fullName>
        <shortName evidence="1">DXP reductoisomerase</shortName>
        <ecNumber evidence="1">1.1.1.267</ecNumber>
    </recommendedName>
    <alternativeName>
        <fullName evidence="1">1-deoxyxylulose-5-phosphate reductoisomerase</fullName>
    </alternativeName>
    <alternativeName>
        <fullName evidence="1">2-C-methyl-D-erythritol 4-phosphate synthase</fullName>
    </alternativeName>
</protein>
<accession>Q5NEP6</accession>
<comment type="function">
    <text evidence="1">Catalyzes the NADPH-dependent rearrangement and reduction of 1-deoxy-D-xylulose-5-phosphate (DXP) to 2-C-methyl-D-erythritol 4-phosphate (MEP).</text>
</comment>
<comment type="catalytic activity">
    <reaction evidence="1">
        <text>2-C-methyl-D-erythritol 4-phosphate + NADP(+) = 1-deoxy-D-xylulose 5-phosphate + NADPH + H(+)</text>
        <dbReference type="Rhea" id="RHEA:13717"/>
        <dbReference type="ChEBI" id="CHEBI:15378"/>
        <dbReference type="ChEBI" id="CHEBI:57783"/>
        <dbReference type="ChEBI" id="CHEBI:57792"/>
        <dbReference type="ChEBI" id="CHEBI:58262"/>
        <dbReference type="ChEBI" id="CHEBI:58349"/>
        <dbReference type="EC" id="1.1.1.267"/>
    </reaction>
    <physiologicalReaction direction="right-to-left" evidence="1">
        <dbReference type="Rhea" id="RHEA:13719"/>
    </physiologicalReaction>
</comment>
<comment type="cofactor">
    <cofactor evidence="1">
        <name>Mg(2+)</name>
        <dbReference type="ChEBI" id="CHEBI:18420"/>
    </cofactor>
    <cofactor evidence="1">
        <name>Mn(2+)</name>
        <dbReference type="ChEBI" id="CHEBI:29035"/>
    </cofactor>
</comment>
<comment type="pathway">
    <text evidence="1">Isoprenoid biosynthesis; isopentenyl diphosphate biosynthesis via DXP pathway; isopentenyl diphosphate from 1-deoxy-D-xylulose 5-phosphate: step 1/6.</text>
</comment>
<comment type="similarity">
    <text evidence="1">Belongs to the DXR family.</text>
</comment>
<keyword id="KW-0414">Isoprene biosynthesis</keyword>
<keyword id="KW-0464">Manganese</keyword>
<keyword id="KW-0479">Metal-binding</keyword>
<keyword id="KW-0521">NADP</keyword>
<keyword id="KW-0560">Oxidoreductase</keyword>
<keyword id="KW-1185">Reference proteome</keyword>
<sequence length="385" mass="42847">MFKKTKITILGATGSIGDSTLAVIRETNDFEVFALTAFSNVEKLAELCQEFKPKFAVVPDLSKKQKLQSLVTDVEVLVGESGLEKVSSLAEIDIVMSAIVGIAGLKPTFAAAKAGKKILLANKESLVTAGHLLIDEVVKNNAQLIPVDSEHNAIFQCIDNHDKKCLPEIDKIILTASGGPFRDKQLHELTDVTPEQACNHPNWQMGRKISVDSSTMVNKALEVIEAYWLFSVSADKIGVLIHPQSVTHSMVRYVDGSYIAQLGVPDMKTPIANAMYYPKRGSVNVESLDFTKYQLTFREACFERFEALKIVFNNLQNKNYAANIVFNAANEELVAAFLNKKIKYLEIIEVNKKVTKELNFENPKNIEEVFEIDRKTREYVDSVLG</sequence>
<reference key="1">
    <citation type="journal article" date="2005" name="Nat. Genet.">
        <title>The complete genome sequence of Francisella tularensis, the causative agent of tularemia.</title>
        <authorList>
            <person name="Larsson P."/>
            <person name="Oyston P.C.F."/>
            <person name="Chain P."/>
            <person name="Chu M.C."/>
            <person name="Duffield M."/>
            <person name="Fuxelius H.-H."/>
            <person name="Garcia E."/>
            <person name="Haelltorp G."/>
            <person name="Johansson D."/>
            <person name="Isherwood K.E."/>
            <person name="Karp P.D."/>
            <person name="Larsson E."/>
            <person name="Liu Y."/>
            <person name="Michell S."/>
            <person name="Prior J."/>
            <person name="Prior R."/>
            <person name="Malfatti S."/>
            <person name="Sjoestedt A."/>
            <person name="Svensson K."/>
            <person name="Thompson N."/>
            <person name="Vergez L."/>
            <person name="Wagg J.K."/>
            <person name="Wren B.W."/>
            <person name="Lindler L.E."/>
            <person name="Andersson S.G.E."/>
            <person name="Forsman M."/>
            <person name="Titball R.W."/>
        </authorList>
    </citation>
    <scope>NUCLEOTIDE SEQUENCE [LARGE SCALE GENOMIC DNA]</scope>
    <source>
        <strain>SCHU S4 / Schu 4</strain>
    </source>
</reference>